<keyword id="KW-0030">Aminoacyl-tRNA synthetase</keyword>
<keyword id="KW-0067">ATP-binding</keyword>
<keyword id="KW-0963">Cytoplasm</keyword>
<keyword id="KW-0436">Ligase</keyword>
<keyword id="KW-0547">Nucleotide-binding</keyword>
<keyword id="KW-0648">Protein biosynthesis</keyword>
<keyword id="KW-1185">Reference proteome</keyword>
<accession>A9BBH9</accession>
<sequence>MHFQDIISSLNSFWSKQGCLLLQPYDTEKGAGTMSPHTFLRAIGPEPWAVAYPEPCRRPTDGRYGDNPNRAQHYFQYQVLIKPSFDGIQETYLSSLEIIGIDPKDHDIRFVEDNWESPTLGAWGVGWEVWLDGMEVTQFTYFQQCGGLDCKPVSIEITYGLERLAMYLQNVDCIWDLSWNQTYKYGDIWLDLEKSNCKYNFEFSNPKRLKELFEIYEGEASDLVLNKLPGPALDFVLKCSHTFNLLEARGVISVTERTSTIGRIRNLARKVAELWLEERQALGFPLLEGDAKE</sequence>
<reference key="1">
    <citation type="journal article" date="2007" name="PLoS Genet.">
        <title>Patterns and implications of gene gain and loss in the evolution of Prochlorococcus.</title>
        <authorList>
            <person name="Kettler G.C."/>
            <person name="Martiny A.C."/>
            <person name="Huang K."/>
            <person name="Zucker J."/>
            <person name="Coleman M.L."/>
            <person name="Rodrigue S."/>
            <person name="Chen F."/>
            <person name="Lapidus A."/>
            <person name="Ferriera S."/>
            <person name="Johnson J."/>
            <person name="Steglich C."/>
            <person name="Church G.M."/>
            <person name="Richardson P."/>
            <person name="Chisholm S.W."/>
        </authorList>
    </citation>
    <scope>NUCLEOTIDE SEQUENCE [LARGE SCALE GENOMIC DNA]</scope>
    <source>
        <strain>MIT 9211</strain>
    </source>
</reference>
<evidence type="ECO:0000255" key="1">
    <source>
        <dbReference type="HAMAP-Rule" id="MF_00254"/>
    </source>
</evidence>
<organism>
    <name type="scientific">Prochlorococcus marinus (strain MIT 9211)</name>
    <dbReference type="NCBI Taxonomy" id="93059"/>
    <lineage>
        <taxon>Bacteria</taxon>
        <taxon>Bacillati</taxon>
        <taxon>Cyanobacteriota</taxon>
        <taxon>Cyanophyceae</taxon>
        <taxon>Synechococcales</taxon>
        <taxon>Prochlorococcaceae</taxon>
        <taxon>Prochlorococcus</taxon>
    </lineage>
</organism>
<dbReference type="EC" id="6.1.1.14" evidence="1"/>
<dbReference type="EMBL" id="CP000878">
    <property type="protein sequence ID" value="ABX09191.1"/>
    <property type="molecule type" value="Genomic_DNA"/>
</dbReference>
<dbReference type="RefSeq" id="WP_012195812.1">
    <property type="nucleotide sequence ID" value="NC_009976.1"/>
</dbReference>
<dbReference type="SMR" id="A9BBH9"/>
<dbReference type="STRING" id="93059.P9211_12601"/>
<dbReference type="KEGG" id="pmj:P9211_12601"/>
<dbReference type="eggNOG" id="COG0752">
    <property type="taxonomic scope" value="Bacteria"/>
</dbReference>
<dbReference type="HOGENOM" id="CLU_057066_1_0_3"/>
<dbReference type="OrthoDB" id="9802183at2"/>
<dbReference type="Proteomes" id="UP000000788">
    <property type="component" value="Chromosome"/>
</dbReference>
<dbReference type="GO" id="GO:0005829">
    <property type="term" value="C:cytosol"/>
    <property type="evidence" value="ECO:0007669"/>
    <property type="project" value="TreeGrafter"/>
</dbReference>
<dbReference type="GO" id="GO:0005524">
    <property type="term" value="F:ATP binding"/>
    <property type="evidence" value="ECO:0007669"/>
    <property type="project" value="UniProtKB-UniRule"/>
</dbReference>
<dbReference type="GO" id="GO:0004820">
    <property type="term" value="F:glycine-tRNA ligase activity"/>
    <property type="evidence" value="ECO:0007669"/>
    <property type="project" value="UniProtKB-UniRule"/>
</dbReference>
<dbReference type="GO" id="GO:0006426">
    <property type="term" value="P:glycyl-tRNA aminoacylation"/>
    <property type="evidence" value="ECO:0007669"/>
    <property type="project" value="UniProtKB-UniRule"/>
</dbReference>
<dbReference type="CDD" id="cd00733">
    <property type="entry name" value="GlyRS_alpha_core"/>
    <property type="match status" value="1"/>
</dbReference>
<dbReference type="FunFam" id="3.30.930.10:FF:000006">
    <property type="entry name" value="Glycine--tRNA ligase alpha subunit"/>
    <property type="match status" value="1"/>
</dbReference>
<dbReference type="Gene3D" id="3.30.930.10">
    <property type="entry name" value="Bira Bifunctional Protein, Domain 2"/>
    <property type="match status" value="1"/>
</dbReference>
<dbReference type="Gene3D" id="1.20.58.180">
    <property type="entry name" value="Class II aaRS and biotin synthetases, domain 2"/>
    <property type="match status" value="1"/>
</dbReference>
<dbReference type="HAMAP" id="MF_00254">
    <property type="entry name" value="Gly_tRNA_synth_alpha"/>
    <property type="match status" value="1"/>
</dbReference>
<dbReference type="InterPro" id="IPR045864">
    <property type="entry name" value="aa-tRNA-synth_II/BPL/LPL"/>
</dbReference>
<dbReference type="InterPro" id="IPR006194">
    <property type="entry name" value="Gly-tRNA-synth_heterodimer"/>
</dbReference>
<dbReference type="InterPro" id="IPR002310">
    <property type="entry name" value="Gly-tRNA_ligase_asu"/>
</dbReference>
<dbReference type="NCBIfam" id="TIGR00388">
    <property type="entry name" value="glyQ"/>
    <property type="match status" value="1"/>
</dbReference>
<dbReference type="NCBIfam" id="NF006827">
    <property type="entry name" value="PRK09348.1"/>
    <property type="match status" value="1"/>
</dbReference>
<dbReference type="PANTHER" id="PTHR30075:SF2">
    <property type="entry name" value="GLYCINE--TRNA LIGASE, CHLOROPLASTIC_MITOCHONDRIAL 2"/>
    <property type="match status" value="1"/>
</dbReference>
<dbReference type="PANTHER" id="PTHR30075">
    <property type="entry name" value="GLYCYL-TRNA SYNTHETASE"/>
    <property type="match status" value="1"/>
</dbReference>
<dbReference type="Pfam" id="PF02091">
    <property type="entry name" value="tRNA-synt_2e"/>
    <property type="match status" value="1"/>
</dbReference>
<dbReference type="PRINTS" id="PR01044">
    <property type="entry name" value="TRNASYNTHGA"/>
</dbReference>
<dbReference type="SUPFAM" id="SSF55681">
    <property type="entry name" value="Class II aaRS and biotin synthetases"/>
    <property type="match status" value="1"/>
</dbReference>
<dbReference type="PROSITE" id="PS50861">
    <property type="entry name" value="AA_TRNA_LIGASE_II_GLYAB"/>
    <property type="match status" value="1"/>
</dbReference>
<protein>
    <recommendedName>
        <fullName evidence="1">Glycine--tRNA ligase alpha subunit</fullName>
        <ecNumber evidence="1">6.1.1.14</ecNumber>
    </recommendedName>
    <alternativeName>
        <fullName evidence="1">Glycyl-tRNA synthetase alpha subunit</fullName>
        <shortName evidence="1">GlyRS</shortName>
    </alternativeName>
</protein>
<proteinExistence type="inferred from homology"/>
<gene>
    <name evidence="1" type="primary">glyQ</name>
    <name type="ordered locus">P9211_12601</name>
</gene>
<comment type="catalytic activity">
    <reaction evidence="1">
        <text>tRNA(Gly) + glycine + ATP = glycyl-tRNA(Gly) + AMP + diphosphate</text>
        <dbReference type="Rhea" id="RHEA:16013"/>
        <dbReference type="Rhea" id="RHEA-COMP:9664"/>
        <dbReference type="Rhea" id="RHEA-COMP:9683"/>
        <dbReference type="ChEBI" id="CHEBI:30616"/>
        <dbReference type="ChEBI" id="CHEBI:33019"/>
        <dbReference type="ChEBI" id="CHEBI:57305"/>
        <dbReference type="ChEBI" id="CHEBI:78442"/>
        <dbReference type="ChEBI" id="CHEBI:78522"/>
        <dbReference type="ChEBI" id="CHEBI:456215"/>
        <dbReference type="EC" id="6.1.1.14"/>
    </reaction>
</comment>
<comment type="subunit">
    <text evidence="1">Tetramer of two alpha and two beta subunits.</text>
</comment>
<comment type="subcellular location">
    <subcellularLocation>
        <location evidence="1">Cytoplasm</location>
    </subcellularLocation>
</comment>
<comment type="similarity">
    <text evidence="1">Belongs to the class-II aminoacyl-tRNA synthetase family.</text>
</comment>
<name>SYGA_PROM4</name>
<feature type="chain" id="PRO_1000101215" description="Glycine--tRNA ligase alpha subunit">
    <location>
        <begin position="1"/>
        <end position="293"/>
    </location>
</feature>